<reference key="1">
    <citation type="journal article" date="2009" name="Science">
        <title>The dynamics and time scale of ongoing genomic erosion in symbiotic bacteria.</title>
        <authorList>
            <person name="Moran N.A."/>
            <person name="McLaughlin H.J."/>
            <person name="Sorek R."/>
        </authorList>
    </citation>
    <scope>NUCLEOTIDE SEQUENCE [LARGE SCALE GENOMIC DNA]</scope>
    <source>
        <strain>5A</strain>
    </source>
</reference>
<comment type="function">
    <text evidence="1">Involved in the biosynthesis of branched-chain amino acids (BCAA). Catalyzes an alkyl-migration followed by a ketol-acid reduction of (S)-2-acetolactate (S2AL) to yield (R)-2,3-dihydroxy-isovalerate. In the isomerase reaction, S2AL is rearranged via a Mg-dependent methyl migration to produce 3-hydroxy-3-methyl-2-ketobutyrate (HMKB). In the reductase reaction, this 2-ketoacid undergoes a metal-dependent reduction by NADPH to yield (R)-2,3-dihydroxy-isovalerate.</text>
</comment>
<comment type="catalytic activity">
    <reaction evidence="1">
        <text>(2R)-2,3-dihydroxy-3-methylbutanoate + NADP(+) = (2S)-2-acetolactate + NADPH + H(+)</text>
        <dbReference type="Rhea" id="RHEA:22068"/>
        <dbReference type="ChEBI" id="CHEBI:15378"/>
        <dbReference type="ChEBI" id="CHEBI:49072"/>
        <dbReference type="ChEBI" id="CHEBI:57783"/>
        <dbReference type="ChEBI" id="CHEBI:58349"/>
        <dbReference type="ChEBI" id="CHEBI:58476"/>
        <dbReference type="EC" id="1.1.1.86"/>
    </reaction>
</comment>
<comment type="catalytic activity">
    <reaction evidence="1">
        <text>(2R,3R)-2,3-dihydroxy-3-methylpentanoate + NADP(+) = (S)-2-ethyl-2-hydroxy-3-oxobutanoate + NADPH + H(+)</text>
        <dbReference type="Rhea" id="RHEA:13493"/>
        <dbReference type="ChEBI" id="CHEBI:15378"/>
        <dbReference type="ChEBI" id="CHEBI:49256"/>
        <dbReference type="ChEBI" id="CHEBI:49258"/>
        <dbReference type="ChEBI" id="CHEBI:57783"/>
        <dbReference type="ChEBI" id="CHEBI:58349"/>
        <dbReference type="EC" id="1.1.1.86"/>
    </reaction>
</comment>
<comment type="cofactor">
    <cofactor evidence="1">
        <name>Mg(2+)</name>
        <dbReference type="ChEBI" id="CHEBI:18420"/>
    </cofactor>
    <text evidence="1">Binds 2 magnesium ions per subunit.</text>
</comment>
<comment type="pathway">
    <text evidence="1">Amino-acid biosynthesis; L-isoleucine biosynthesis; L-isoleucine from 2-oxobutanoate: step 2/4.</text>
</comment>
<comment type="pathway">
    <text evidence="1">Amino-acid biosynthesis; L-valine biosynthesis; L-valine from pyruvate: step 2/4.</text>
</comment>
<comment type="similarity">
    <text evidence="1">Belongs to the ketol-acid reductoisomerase family.</text>
</comment>
<protein>
    <recommendedName>
        <fullName evidence="1">Ketol-acid reductoisomerase (NADP(+))</fullName>
        <shortName evidence="1">KARI</shortName>
        <ecNumber evidence="1">1.1.1.86</ecNumber>
    </recommendedName>
    <alternativeName>
        <fullName evidence="1">Acetohydroxy-acid isomeroreductase</fullName>
        <shortName evidence="1">AHIR</shortName>
    </alternativeName>
    <alternativeName>
        <fullName evidence="1">Alpha-keto-beta-hydroxylacyl reductoisomerase</fullName>
    </alternativeName>
    <alternativeName>
        <fullName evidence="1">Ketol-acid reductoisomerase type 2</fullName>
    </alternativeName>
    <alternativeName>
        <fullName evidence="1">Ketol-acid reductoisomerase type II</fullName>
    </alternativeName>
</protein>
<dbReference type="EC" id="1.1.1.86" evidence="1"/>
<dbReference type="EMBL" id="CP001161">
    <property type="protein sequence ID" value="ACL30933.1"/>
    <property type="molecule type" value="Genomic_DNA"/>
</dbReference>
<dbReference type="SMR" id="B8D8F7"/>
<dbReference type="KEGG" id="bap:BUAP5A_591"/>
<dbReference type="HOGENOM" id="CLU_551905_0_0_6"/>
<dbReference type="OrthoDB" id="9804088at2"/>
<dbReference type="UniPathway" id="UPA00047">
    <property type="reaction ID" value="UER00056"/>
</dbReference>
<dbReference type="UniPathway" id="UPA00049">
    <property type="reaction ID" value="UER00060"/>
</dbReference>
<dbReference type="Proteomes" id="UP000006904">
    <property type="component" value="Chromosome"/>
</dbReference>
<dbReference type="GO" id="GO:0005829">
    <property type="term" value="C:cytosol"/>
    <property type="evidence" value="ECO:0007669"/>
    <property type="project" value="TreeGrafter"/>
</dbReference>
<dbReference type="GO" id="GO:0004455">
    <property type="term" value="F:ketol-acid reductoisomerase activity"/>
    <property type="evidence" value="ECO:0007669"/>
    <property type="project" value="UniProtKB-UniRule"/>
</dbReference>
<dbReference type="GO" id="GO:0000287">
    <property type="term" value="F:magnesium ion binding"/>
    <property type="evidence" value="ECO:0007669"/>
    <property type="project" value="UniProtKB-UniRule"/>
</dbReference>
<dbReference type="GO" id="GO:0009097">
    <property type="term" value="P:isoleucine biosynthetic process"/>
    <property type="evidence" value="ECO:0007669"/>
    <property type="project" value="UniProtKB-UniRule"/>
</dbReference>
<dbReference type="GO" id="GO:0009099">
    <property type="term" value="P:L-valine biosynthetic process"/>
    <property type="evidence" value="ECO:0007669"/>
    <property type="project" value="UniProtKB-UniRule"/>
</dbReference>
<dbReference type="Gene3D" id="1.10.1040.10">
    <property type="entry name" value="N-(1-d-carboxylethyl)-l-norvaline Dehydrogenase, domain 2"/>
    <property type="match status" value="1"/>
</dbReference>
<dbReference type="Gene3D" id="3.40.50.720">
    <property type="entry name" value="NAD(P)-binding Rossmann-like Domain"/>
    <property type="match status" value="1"/>
</dbReference>
<dbReference type="HAMAP" id="MF_00435">
    <property type="entry name" value="IlvC"/>
    <property type="match status" value="1"/>
</dbReference>
<dbReference type="InterPro" id="IPR008927">
    <property type="entry name" value="6-PGluconate_DH-like_C_sf"/>
</dbReference>
<dbReference type="InterPro" id="IPR013328">
    <property type="entry name" value="6PGD_dom2"/>
</dbReference>
<dbReference type="InterPro" id="IPR013023">
    <property type="entry name" value="KARI"/>
</dbReference>
<dbReference type="InterPro" id="IPR000506">
    <property type="entry name" value="KARI_C"/>
</dbReference>
<dbReference type="InterPro" id="IPR013116">
    <property type="entry name" value="KARI_N"/>
</dbReference>
<dbReference type="InterPro" id="IPR036291">
    <property type="entry name" value="NAD(P)-bd_dom_sf"/>
</dbReference>
<dbReference type="NCBIfam" id="TIGR00465">
    <property type="entry name" value="ilvC"/>
    <property type="match status" value="1"/>
</dbReference>
<dbReference type="NCBIfam" id="NF003557">
    <property type="entry name" value="PRK05225.1"/>
    <property type="match status" value="1"/>
</dbReference>
<dbReference type="PANTHER" id="PTHR21371">
    <property type="entry name" value="KETOL-ACID REDUCTOISOMERASE, MITOCHONDRIAL"/>
    <property type="match status" value="1"/>
</dbReference>
<dbReference type="PANTHER" id="PTHR21371:SF1">
    <property type="entry name" value="KETOL-ACID REDUCTOISOMERASE, MITOCHONDRIAL"/>
    <property type="match status" value="1"/>
</dbReference>
<dbReference type="Pfam" id="PF01450">
    <property type="entry name" value="KARI_C"/>
    <property type="match status" value="2"/>
</dbReference>
<dbReference type="Pfam" id="PF07991">
    <property type="entry name" value="KARI_N"/>
    <property type="match status" value="1"/>
</dbReference>
<dbReference type="SUPFAM" id="SSF48179">
    <property type="entry name" value="6-phosphogluconate dehydrogenase C-terminal domain-like"/>
    <property type="match status" value="2"/>
</dbReference>
<dbReference type="SUPFAM" id="SSF51735">
    <property type="entry name" value="NAD(P)-binding Rossmann-fold domains"/>
    <property type="match status" value="1"/>
</dbReference>
<dbReference type="PROSITE" id="PS51851">
    <property type="entry name" value="KARI_C"/>
    <property type="match status" value="2"/>
</dbReference>
<dbReference type="PROSITE" id="PS51850">
    <property type="entry name" value="KARI_N"/>
    <property type="match status" value="1"/>
</dbReference>
<sequence>MNYFNTLNFTQKINQINKCRFMKKEEFNKKNDILKNKNIVIVGCGAQGLNQGLNMRDAGLNISYALKKNSIANKNQSWINAIENNFKVDDYDALIPDADLVINLTPDKQHHSVIKKLQKLMKKNAVLGYSHGFNIVEFGEKIRKDITVIMVAPKCPGTEVREEYKRGFGVPTLIAVHHENDINKIGLEVAKAWAFSTGGHRAGVLESSFIAEVKSDLMGEQTILCGMLQTASLLCYEKLITEKCNPAYSAKLIQNGWETITESLKHGGITLMMDRLSNSSKIRAYKLSKEIKKILSPLFQKHMDDIISGEFSNEMMKDWENQDLKLLNWRYKTKNTSFETAPVYNEKIPEQEYYDHGILMIAILKSGIELSFEKMIETGIKEESAYYESLHELPLIANTIARKKLYEMNKVISDTAEYGSYLFSESAYPILKEFISTLNKSDLGCALSHQSVNNIELYRINQKIQNHPIEIIGCTLRNYMKKMKAITVAK</sequence>
<feature type="chain" id="PRO_1000190917" description="Ketol-acid reductoisomerase (NADP(+))">
    <location>
        <begin position="1"/>
        <end position="490"/>
    </location>
</feature>
<feature type="domain" description="KARI N-terminal Rossmann" evidence="2">
    <location>
        <begin position="16"/>
        <end position="207"/>
    </location>
</feature>
<feature type="domain" description="KARI C-terminal knotted 1" evidence="3">
    <location>
        <begin position="208"/>
        <end position="343"/>
    </location>
</feature>
<feature type="domain" description="KARI C-terminal knotted 2" evidence="3">
    <location>
        <begin position="344"/>
        <end position="483"/>
    </location>
</feature>
<feature type="active site" evidence="1">
    <location>
        <position position="131"/>
    </location>
</feature>
<feature type="binding site" evidence="1">
    <location>
        <begin position="44"/>
        <end position="47"/>
    </location>
    <ligand>
        <name>NADP(+)</name>
        <dbReference type="ChEBI" id="CHEBI:58349"/>
    </ligand>
</feature>
<feature type="binding site" evidence="1">
    <location>
        <position position="67"/>
    </location>
    <ligand>
        <name>NADP(+)</name>
        <dbReference type="ChEBI" id="CHEBI:58349"/>
    </ligand>
</feature>
<feature type="binding site" evidence="1">
    <location>
        <position position="77"/>
    </location>
    <ligand>
        <name>NADP(+)</name>
        <dbReference type="ChEBI" id="CHEBI:58349"/>
    </ligand>
</feature>
<feature type="binding site" evidence="1">
    <location>
        <begin position="107"/>
        <end position="109"/>
    </location>
    <ligand>
        <name>NADP(+)</name>
        <dbReference type="ChEBI" id="CHEBI:58349"/>
    </ligand>
</feature>
<feature type="binding site" evidence="1">
    <location>
        <position position="157"/>
    </location>
    <ligand>
        <name>NADP(+)</name>
        <dbReference type="ChEBI" id="CHEBI:58349"/>
    </ligand>
</feature>
<feature type="binding site" evidence="1">
    <location>
        <position position="216"/>
    </location>
    <ligand>
        <name>Mg(2+)</name>
        <dbReference type="ChEBI" id="CHEBI:18420"/>
        <label>1</label>
    </ligand>
</feature>
<feature type="binding site" evidence="1">
    <location>
        <position position="216"/>
    </location>
    <ligand>
        <name>Mg(2+)</name>
        <dbReference type="ChEBI" id="CHEBI:18420"/>
        <label>2</label>
    </ligand>
</feature>
<feature type="binding site" evidence="1">
    <location>
        <position position="220"/>
    </location>
    <ligand>
        <name>Mg(2+)</name>
        <dbReference type="ChEBI" id="CHEBI:18420"/>
        <label>1</label>
    </ligand>
</feature>
<feature type="binding site" evidence="1">
    <location>
        <position position="388"/>
    </location>
    <ligand>
        <name>Mg(2+)</name>
        <dbReference type="ChEBI" id="CHEBI:18420"/>
        <label>2</label>
    </ligand>
</feature>
<feature type="binding site" evidence="1">
    <location>
        <position position="392"/>
    </location>
    <ligand>
        <name>Mg(2+)</name>
        <dbReference type="ChEBI" id="CHEBI:18420"/>
        <label>2</label>
    </ligand>
</feature>
<feature type="binding site" evidence="1">
    <location>
        <position position="413"/>
    </location>
    <ligand>
        <name>substrate</name>
    </ligand>
</feature>
<keyword id="KW-0028">Amino-acid biosynthesis</keyword>
<keyword id="KW-0100">Branched-chain amino acid biosynthesis</keyword>
<keyword id="KW-0460">Magnesium</keyword>
<keyword id="KW-0479">Metal-binding</keyword>
<keyword id="KW-0521">NADP</keyword>
<keyword id="KW-0560">Oxidoreductase</keyword>
<keyword id="KW-0677">Repeat</keyword>
<proteinExistence type="inferred from homology"/>
<evidence type="ECO:0000255" key="1">
    <source>
        <dbReference type="HAMAP-Rule" id="MF_00435"/>
    </source>
</evidence>
<evidence type="ECO:0000255" key="2">
    <source>
        <dbReference type="PROSITE-ProRule" id="PRU01197"/>
    </source>
</evidence>
<evidence type="ECO:0000255" key="3">
    <source>
        <dbReference type="PROSITE-ProRule" id="PRU01198"/>
    </source>
</evidence>
<name>ILVC_BUCA5</name>
<accession>B8D8F7</accession>
<gene>
    <name evidence="1" type="primary">ilvC</name>
    <name type="ordered locus">BUAP5A_591</name>
</gene>
<organism>
    <name type="scientific">Buchnera aphidicola subsp. Acyrthosiphon pisum (strain 5A)</name>
    <dbReference type="NCBI Taxonomy" id="563178"/>
    <lineage>
        <taxon>Bacteria</taxon>
        <taxon>Pseudomonadati</taxon>
        <taxon>Pseudomonadota</taxon>
        <taxon>Gammaproteobacteria</taxon>
        <taxon>Enterobacterales</taxon>
        <taxon>Erwiniaceae</taxon>
        <taxon>Buchnera</taxon>
    </lineage>
</organism>